<protein>
    <recommendedName>
        <fullName evidence="2">Pancreatic lipase-related protein 2</fullName>
        <shortName evidence="2">PL-RP2</shortName>
    </recommendedName>
    <alternativeName>
        <fullName evidence="1">Cytotoxic T lymphocyte lipase</fullName>
    </alternativeName>
    <alternativeName>
        <fullName>Galactolipase</fullName>
        <ecNumber evidence="2">3.1.1.26</ecNumber>
    </alternativeName>
    <alternativeName>
        <fullName>Triacylglycerol lipase</fullName>
        <ecNumber evidence="8">3.1.1.3</ecNumber>
    </alternativeName>
</protein>
<name>LIPR2_MYOCO</name>
<evidence type="ECO:0000250" key="1">
    <source>
        <dbReference type="UniProtKB" id="P17892"/>
    </source>
</evidence>
<evidence type="ECO:0000250" key="2">
    <source>
        <dbReference type="UniProtKB" id="P54317"/>
    </source>
</evidence>
<evidence type="ECO:0000250" key="3">
    <source>
        <dbReference type="UniProtKB" id="P54318"/>
    </source>
</evidence>
<evidence type="ECO:0000255" key="4"/>
<evidence type="ECO:0000255" key="5">
    <source>
        <dbReference type="PROSITE-ProRule" id="PRU00152"/>
    </source>
</evidence>
<evidence type="ECO:0000255" key="6">
    <source>
        <dbReference type="PROSITE-ProRule" id="PRU10037"/>
    </source>
</evidence>
<evidence type="ECO:0000269" key="7">
    <source>
    </source>
</evidence>
<evidence type="ECO:0000269" key="8">
    <source>
    </source>
</evidence>
<evidence type="ECO:0000305" key="9"/>
<evidence type="ECO:0000305" key="10">
    <source>
    </source>
</evidence>
<reference key="1">
    <citation type="journal article" date="1995" name="Eur. J. Biochem.">
        <title>Cloning and expression in insect cells of two pancreatic lipases and a procolipase from Myocastor coypus.</title>
        <authorList>
            <person name="Thirstrup K."/>
            <person name="Carriere F."/>
            <person name="Hjorth S.A."/>
            <person name="Rasmussen P.B."/>
            <person name="Nielsen P.F."/>
            <person name="Ladefoged C."/>
            <person name="Thim L."/>
            <person name="Boel E."/>
        </authorList>
    </citation>
    <scope>NUCLEOTIDE SEQUENCE [MRNA]</scope>
    <scope>PROTEIN SEQUENCE OF 19-23</scope>
    <scope>TISSUE SPECIFICITY</scope>
    <source>
        <tissue>Pancreas</tissue>
    </source>
</reference>
<reference key="2">
    <citation type="journal article" date="1994" name="Biochemistry">
        <title>Evidence for a pancreatic lipase subfamily with new kinetic properties.</title>
        <authorList>
            <person name="Thirstrup K."/>
            <person name="Verger R."/>
            <person name="Carriere F."/>
        </authorList>
    </citation>
    <scope>NUCLEOTIDE SEQUENCE [MRNA]</scope>
    <scope>FUNCTION</scope>
    <scope>CATALYTIC ACTIVITY</scope>
    <scope>ACTIVITY REGULATION</scope>
</reference>
<gene>
    <name evidence="2" type="primary">PNLIPRP2</name>
</gene>
<sequence>MMLFVWTTGLLLLATARGNEVCYSHLGCFSDEKPWAGTLQRPVKSLPASPESINTRFLLYTNENPNNYQLITATDPATIKASNFNLHRKTRFVIHGFIDNGEKDWLTDICKRMFQVEKVNCICVDWQGGSLAIYSQAVQNIRVVGAEVAYLVQVLSDQLGYKPGNVHMIGHSLGAHTAAEAGRRLKGLVGRITGLDPAEPCFQDTPEEVRLDPSDAMFVDVIHTDIAPIIPSFGFGMSQKVGHMDFFPNGGKEMPGCEKNIISTIVDVNGFLEGITSLAACNHMRSYQYYSSSILNPDGFLGYPCASYEEFQKDGCFPCPAEGCPKMGHYADQFQGKANGVEKTYFLNTGDSDNFPRWRYKVSVTLSGEKELSGDIKIALFGRNGNSKQYEIFKGSLKPDARYTHDIDVDLNVGEIQKVKFLWHNNGINLLQPKLGASQITVQSGEYGTKYNFCSSNTVQEDVLQSLSPC</sequence>
<keyword id="KW-0106">Calcium</keyword>
<keyword id="KW-0966">Cell projection</keyword>
<keyword id="KW-0968">Cytoplasmic vesicle</keyword>
<keyword id="KW-0903">Direct protein sequencing</keyword>
<keyword id="KW-1015">Disulfide bond</keyword>
<keyword id="KW-0325">Glycoprotein</keyword>
<keyword id="KW-0378">Hydrolase</keyword>
<keyword id="KW-0442">Lipid degradation</keyword>
<keyword id="KW-0443">Lipid metabolism</keyword>
<keyword id="KW-0472">Membrane</keyword>
<keyword id="KW-0479">Metal-binding</keyword>
<keyword id="KW-0964">Secreted</keyword>
<keyword id="KW-0732">Signal</keyword>
<organism>
    <name type="scientific">Myocastor coypus</name>
    <name type="common">Coypu</name>
    <name type="synonym">Mus coypus</name>
    <dbReference type="NCBI Taxonomy" id="10157"/>
    <lineage>
        <taxon>Eukaryota</taxon>
        <taxon>Metazoa</taxon>
        <taxon>Chordata</taxon>
        <taxon>Craniata</taxon>
        <taxon>Vertebrata</taxon>
        <taxon>Euteleostomi</taxon>
        <taxon>Mammalia</taxon>
        <taxon>Eutheria</taxon>
        <taxon>Euarchontoglires</taxon>
        <taxon>Glires</taxon>
        <taxon>Rodentia</taxon>
        <taxon>Hystricomorpha</taxon>
        <taxon>Myocastoridae</taxon>
        <taxon>Myocastor</taxon>
    </lineage>
</organism>
<proteinExistence type="evidence at protein level"/>
<dbReference type="EC" id="3.1.1.26" evidence="2"/>
<dbReference type="EC" id="3.1.1.3" evidence="8"/>
<dbReference type="EMBL" id="X83000">
    <property type="protein sequence ID" value="CAA58121.1"/>
    <property type="molecule type" value="mRNA"/>
</dbReference>
<dbReference type="PIR" id="A54232">
    <property type="entry name" value="A54232"/>
</dbReference>
<dbReference type="SMR" id="Q64424"/>
<dbReference type="ESTHER" id="myoco-2plrp">
    <property type="family name" value="Pancreatic_lipase"/>
</dbReference>
<dbReference type="GlyCosmos" id="Q64424">
    <property type="glycosylation" value="2 sites, No reported glycans"/>
</dbReference>
<dbReference type="UniPathway" id="UPA00256"/>
<dbReference type="GO" id="GO:0005615">
    <property type="term" value="C:extracellular space"/>
    <property type="evidence" value="ECO:0000250"/>
    <property type="project" value="UniProtKB"/>
</dbReference>
<dbReference type="GO" id="GO:0043005">
    <property type="term" value="C:neuron projection"/>
    <property type="evidence" value="ECO:0000250"/>
    <property type="project" value="UniProtKB"/>
</dbReference>
<dbReference type="GO" id="GO:0042589">
    <property type="term" value="C:zymogen granule membrane"/>
    <property type="evidence" value="ECO:0007669"/>
    <property type="project" value="UniProtKB-SubCell"/>
</dbReference>
<dbReference type="GO" id="GO:0005509">
    <property type="term" value="F:calcium ion binding"/>
    <property type="evidence" value="ECO:0000250"/>
    <property type="project" value="UniProtKB"/>
</dbReference>
<dbReference type="GO" id="GO:0047714">
    <property type="term" value="F:galactolipase activity"/>
    <property type="evidence" value="ECO:0000250"/>
    <property type="project" value="UniProtKB"/>
</dbReference>
<dbReference type="GO" id="GO:0004465">
    <property type="term" value="F:lipoprotein lipase activity"/>
    <property type="evidence" value="ECO:0007669"/>
    <property type="project" value="TreeGrafter"/>
</dbReference>
<dbReference type="GO" id="GO:0047372">
    <property type="term" value="F:monoacylglycerol lipase activity"/>
    <property type="evidence" value="ECO:0000250"/>
    <property type="project" value="UniProtKB"/>
</dbReference>
<dbReference type="GO" id="GO:0004620">
    <property type="term" value="F:phospholipase activity"/>
    <property type="evidence" value="ECO:0000250"/>
    <property type="project" value="UniProtKB"/>
</dbReference>
<dbReference type="GO" id="GO:0004806">
    <property type="term" value="F:triacylglycerol lipase activity"/>
    <property type="evidence" value="ECO:0000250"/>
    <property type="project" value="UniProtKB"/>
</dbReference>
<dbReference type="GO" id="GO:0019376">
    <property type="term" value="P:galactolipid catabolic process"/>
    <property type="evidence" value="ECO:0000250"/>
    <property type="project" value="UniProtKB"/>
</dbReference>
<dbReference type="GO" id="GO:0034638">
    <property type="term" value="P:phosphatidylcholine catabolic process"/>
    <property type="evidence" value="ECO:0000250"/>
    <property type="project" value="UniProtKB"/>
</dbReference>
<dbReference type="GO" id="GO:0009395">
    <property type="term" value="P:phospholipid catabolic process"/>
    <property type="evidence" value="ECO:0000250"/>
    <property type="project" value="UniProtKB"/>
</dbReference>
<dbReference type="GO" id="GO:0006644">
    <property type="term" value="P:phospholipid metabolic process"/>
    <property type="evidence" value="ECO:0000250"/>
    <property type="project" value="UniProtKB"/>
</dbReference>
<dbReference type="GO" id="GO:0019433">
    <property type="term" value="P:triglyceride catabolic process"/>
    <property type="evidence" value="ECO:0000250"/>
    <property type="project" value="UniProtKB"/>
</dbReference>
<dbReference type="CDD" id="cd00707">
    <property type="entry name" value="Pancreat_lipase_like"/>
    <property type="match status" value="1"/>
</dbReference>
<dbReference type="CDD" id="cd01759">
    <property type="entry name" value="PLAT_PL"/>
    <property type="match status" value="1"/>
</dbReference>
<dbReference type="FunFam" id="3.40.50.1820:FF:000033">
    <property type="entry name" value="Pancreatic triacylglycerol lipase"/>
    <property type="match status" value="1"/>
</dbReference>
<dbReference type="FunFam" id="2.60.60.20:FF:000003">
    <property type="entry name" value="Triacylglycerol lipase"/>
    <property type="match status" value="1"/>
</dbReference>
<dbReference type="Gene3D" id="3.40.50.1820">
    <property type="entry name" value="alpha/beta hydrolase"/>
    <property type="match status" value="1"/>
</dbReference>
<dbReference type="Gene3D" id="2.60.60.20">
    <property type="entry name" value="PLAT/LH2 domain"/>
    <property type="match status" value="1"/>
</dbReference>
<dbReference type="InterPro" id="IPR029058">
    <property type="entry name" value="AB_hydrolase_fold"/>
</dbReference>
<dbReference type="InterPro" id="IPR013818">
    <property type="entry name" value="Lipase"/>
</dbReference>
<dbReference type="InterPro" id="IPR016272">
    <property type="entry name" value="Lipase_LIPH"/>
</dbReference>
<dbReference type="InterPro" id="IPR033906">
    <property type="entry name" value="Lipase_N"/>
</dbReference>
<dbReference type="InterPro" id="IPR002331">
    <property type="entry name" value="Lipase_panc"/>
</dbReference>
<dbReference type="InterPro" id="IPR001024">
    <property type="entry name" value="PLAT/LH2_dom"/>
</dbReference>
<dbReference type="InterPro" id="IPR036392">
    <property type="entry name" value="PLAT/LH2_dom_sf"/>
</dbReference>
<dbReference type="InterPro" id="IPR000734">
    <property type="entry name" value="TAG_lipase"/>
</dbReference>
<dbReference type="PANTHER" id="PTHR11610">
    <property type="entry name" value="LIPASE"/>
    <property type="match status" value="1"/>
</dbReference>
<dbReference type="PANTHER" id="PTHR11610:SF165">
    <property type="entry name" value="PANCREATIC LIPASE-RELATED PROTEIN 2"/>
    <property type="match status" value="1"/>
</dbReference>
<dbReference type="Pfam" id="PF00151">
    <property type="entry name" value="Lipase"/>
    <property type="match status" value="1"/>
</dbReference>
<dbReference type="Pfam" id="PF01477">
    <property type="entry name" value="PLAT"/>
    <property type="match status" value="1"/>
</dbReference>
<dbReference type="PIRSF" id="PIRSF000865">
    <property type="entry name" value="Lipoprotein_lipase_LIPH"/>
    <property type="match status" value="1"/>
</dbReference>
<dbReference type="PRINTS" id="PR00823">
    <property type="entry name" value="PANCLIPASE"/>
</dbReference>
<dbReference type="PRINTS" id="PR00821">
    <property type="entry name" value="TAGLIPASE"/>
</dbReference>
<dbReference type="SMART" id="SM00308">
    <property type="entry name" value="LH2"/>
    <property type="match status" value="1"/>
</dbReference>
<dbReference type="SUPFAM" id="SSF53474">
    <property type="entry name" value="alpha/beta-Hydrolases"/>
    <property type="match status" value="1"/>
</dbReference>
<dbReference type="SUPFAM" id="SSF49723">
    <property type="entry name" value="Lipase/lipooxygenase domain (PLAT/LH2 domain)"/>
    <property type="match status" value="1"/>
</dbReference>
<dbReference type="PROSITE" id="PS50095">
    <property type="entry name" value="PLAT"/>
    <property type="match status" value="1"/>
</dbReference>
<comment type="function">
    <text evidence="1 2 3 8">Lipase that primarily hydrolyzes triglycerides and galactosylglycerides (PubMed:8130186). In neonates, may play a major role in pancreatic digestion of dietary fats such as milk fat globules enriched in long-chain triglycerides (By similarity). Hydrolyzes short-, medium- and long-chain fatty acyls in triglycerides without apparent positional specificity (By similarity). Can completely deacylate triacylglycerols (By similarity). When the liver matures and bile salt synthesis increases, likely functions mainly as a galactolipase and monoacylglycerol lipase. Hydrolyzes monogalactosyldiglycerols (MGDG) and digalactosyldiacylglycerols (DGDG) present in a plant-based diet, releasing long-chain polyunsaturated fatty acids (By similarity). Hydrolyzes medium- and long-chain fatty acyls in galactolipids. May act together with LIPF to hydrolyze partially digested triglycerides (By similarity). Hydrolyzes long-chain monoglycerides with high efficiency (By similarity). In cytotoxic T cells, contributes to perforin-dependent cell lysis, but is unlikely to mediate direct cytotoxicity (By similarity). Also has low phospholipase activity (PubMed:8130186). In neurons, required for the localization of the phospholipid 1-oleoyl-2-palmitoyl-PC (OPPC) to neurite tips through acyl chain remodeling of membrane phospholipids (By similarity). The resulting OPPC-rich lipid membrane domain recruits the t-SNARE protein STX4 by selectively interacting with the STX4 transmembrane domain and this promotes surface expression of the dopamine transporter SLC6A3/DAT at neurite tips by facilitating fusion of SLC6A3-containing transport vesicles with the plasma membrane (By similarity).</text>
</comment>
<comment type="catalytic activity">
    <reaction evidence="8">
        <text>a triacylglycerol + H2O = a diacylglycerol + a fatty acid + H(+)</text>
        <dbReference type="Rhea" id="RHEA:12044"/>
        <dbReference type="ChEBI" id="CHEBI:15377"/>
        <dbReference type="ChEBI" id="CHEBI:15378"/>
        <dbReference type="ChEBI" id="CHEBI:17855"/>
        <dbReference type="ChEBI" id="CHEBI:18035"/>
        <dbReference type="ChEBI" id="CHEBI:28868"/>
        <dbReference type="EC" id="3.1.1.3"/>
    </reaction>
    <physiologicalReaction direction="left-to-right" evidence="10">
        <dbReference type="Rhea" id="RHEA:12045"/>
    </physiologicalReaction>
</comment>
<comment type="catalytic activity">
    <reaction evidence="2">
        <text>a 1,2-diacyl-3-O-(beta-D-galactosyl)-sn-glycerol + 2 H2O = 3-beta-D-galactosyl-sn-glycerol + 2 a fatty acid + 2 H(+)</text>
        <dbReference type="Rhea" id="RHEA:13189"/>
        <dbReference type="ChEBI" id="CHEBI:15377"/>
        <dbReference type="ChEBI" id="CHEBI:15378"/>
        <dbReference type="ChEBI" id="CHEBI:15754"/>
        <dbReference type="ChEBI" id="CHEBI:17615"/>
        <dbReference type="ChEBI" id="CHEBI:28868"/>
        <dbReference type="EC" id="3.1.1.26"/>
    </reaction>
    <physiologicalReaction direction="left-to-right" evidence="2">
        <dbReference type="Rhea" id="RHEA:13190"/>
    </physiologicalReaction>
</comment>
<comment type="catalytic activity">
    <reaction evidence="2">
        <text>1,2,3-tri-(9Z-octadecenoyl)-glycerol + H2O = di-(9Z)-octadecenoylglycerol + (9Z)-octadecenoate + H(+)</text>
        <dbReference type="Rhea" id="RHEA:38575"/>
        <dbReference type="ChEBI" id="CHEBI:15377"/>
        <dbReference type="ChEBI" id="CHEBI:15378"/>
        <dbReference type="ChEBI" id="CHEBI:30823"/>
        <dbReference type="ChEBI" id="CHEBI:53753"/>
        <dbReference type="ChEBI" id="CHEBI:75945"/>
    </reaction>
    <physiologicalReaction direction="left-to-right" evidence="2">
        <dbReference type="Rhea" id="RHEA:38576"/>
    </physiologicalReaction>
</comment>
<comment type="catalytic activity">
    <reaction evidence="2">
        <text>di-(9Z)-octadecenoylglycerol + H2O = (9Z-octadecenoyl)-glycerol + (9Z)-octadecenoate + H(+)</text>
        <dbReference type="Rhea" id="RHEA:47868"/>
        <dbReference type="ChEBI" id="CHEBI:15377"/>
        <dbReference type="ChEBI" id="CHEBI:15378"/>
        <dbReference type="ChEBI" id="CHEBI:30823"/>
        <dbReference type="ChEBI" id="CHEBI:75937"/>
        <dbReference type="ChEBI" id="CHEBI:75945"/>
    </reaction>
    <physiologicalReaction direction="left-to-right" evidence="2">
        <dbReference type="Rhea" id="RHEA:47869"/>
    </physiologicalReaction>
</comment>
<comment type="catalytic activity">
    <reaction evidence="2">
        <text>(9Z-octadecenoyl)-glycerol + H2O = glycerol + (9Z)-octadecenoate + H(+)</text>
        <dbReference type="Rhea" id="RHEA:39955"/>
        <dbReference type="ChEBI" id="CHEBI:15377"/>
        <dbReference type="ChEBI" id="CHEBI:15378"/>
        <dbReference type="ChEBI" id="CHEBI:17754"/>
        <dbReference type="ChEBI" id="CHEBI:30823"/>
        <dbReference type="ChEBI" id="CHEBI:75937"/>
    </reaction>
    <physiologicalReaction direction="left-to-right" evidence="2">
        <dbReference type="Rhea" id="RHEA:39956"/>
    </physiologicalReaction>
</comment>
<comment type="catalytic activity">
    <reaction evidence="2">
        <text>1-(9Z-octadecenoyl)-glycerol + H2O = glycerol + (9Z)-octadecenoate + H(+)</text>
        <dbReference type="Rhea" id="RHEA:38487"/>
        <dbReference type="ChEBI" id="CHEBI:15377"/>
        <dbReference type="ChEBI" id="CHEBI:15378"/>
        <dbReference type="ChEBI" id="CHEBI:17754"/>
        <dbReference type="ChEBI" id="CHEBI:30823"/>
        <dbReference type="ChEBI" id="CHEBI:75342"/>
    </reaction>
    <physiologicalReaction direction="left-to-right" evidence="2">
        <dbReference type="Rhea" id="RHEA:38488"/>
    </physiologicalReaction>
</comment>
<comment type="catalytic activity">
    <reaction evidence="2">
        <text>1,2,3-tripropanoylglycerol + H2O = dipropanoylglycerol + propanoate + H(+)</text>
        <dbReference type="Rhea" id="RHEA:48024"/>
        <dbReference type="ChEBI" id="CHEBI:15377"/>
        <dbReference type="ChEBI" id="CHEBI:15378"/>
        <dbReference type="ChEBI" id="CHEBI:17272"/>
        <dbReference type="ChEBI" id="CHEBI:88153"/>
        <dbReference type="ChEBI" id="CHEBI:88155"/>
    </reaction>
    <physiologicalReaction direction="left-to-right" evidence="2">
        <dbReference type="Rhea" id="RHEA:48025"/>
    </physiologicalReaction>
</comment>
<comment type="catalytic activity">
    <reaction evidence="8">
        <text>1,2,3-tributanoylglycerol + H2O = dibutanoylglycerol + butanoate + H(+)</text>
        <dbReference type="Rhea" id="RHEA:40475"/>
        <dbReference type="ChEBI" id="CHEBI:15377"/>
        <dbReference type="ChEBI" id="CHEBI:15378"/>
        <dbReference type="ChEBI" id="CHEBI:17968"/>
        <dbReference type="ChEBI" id="CHEBI:35020"/>
        <dbReference type="ChEBI" id="CHEBI:76478"/>
    </reaction>
    <physiologicalReaction direction="left-to-right" evidence="10">
        <dbReference type="Rhea" id="RHEA:40476"/>
    </physiologicalReaction>
</comment>
<comment type="catalytic activity">
    <reaction evidence="2">
        <text>1,2,3-trioctanoylglycerol + H2O = dioctanoylglycerol + octanoate + H(+)</text>
        <dbReference type="Rhea" id="RHEA:47864"/>
        <dbReference type="ChEBI" id="CHEBI:15377"/>
        <dbReference type="ChEBI" id="CHEBI:15378"/>
        <dbReference type="ChEBI" id="CHEBI:25646"/>
        <dbReference type="ChEBI" id="CHEBI:76978"/>
        <dbReference type="ChEBI" id="CHEBI:88066"/>
    </reaction>
    <physiologicalReaction direction="left-to-right" evidence="2">
        <dbReference type="Rhea" id="RHEA:47865"/>
    </physiologicalReaction>
</comment>
<comment type="catalytic activity">
    <reaction evidence="2">
        <text>1,2-didecanoylglycerol + H2O = decanoylglycerol + decanoate + H(+)</text>
        <dbReference type="Rhea" id="RHEA:48596"/>
        <dbReference type="ChEBI" id="CHEBI:11152"/>
        <dbReference type="ChEBI" id="CHEBI:15377"/>
        <dbReference type="ChEBI" id="CHEBI:15378"/>
        <dbReference type="ChEBI" id="CHEBI:27689"/>
        <dbReference type="ChEBI" id="CHEBI:90605"/>
    </reaction>
    <physiologicalReaction direction="left-to-right" evidence="2">
        <dbReference type="Rhea" id="RHEA:48597"/>
    </physiologicalReaction>
</comment>
<comment type="catalytic activity">
    <reaction evidence="2">
        <text>long chain 1,2-diacyl-3-O-beta-D-galactosyl-sn-glycerol + H2O = long chain acyl-3-O-beta-D-galactosyl-sn-glycerol + a fatty acid + H(+)</text>
        <dbReference type="Rhea" id="RHEA:48700"/>
        <dbReference type="ChEBI" id="CHEBI:15377"/>
        <dbReference type="ChEBI" id="CHEBI:15378"/>
        <dbReference type="ChEBI" id="CHEBI:28868"/>
        <dbReference type="ChEBI" id="CHEBI:90477"/>
        <dbReference type="ChEBI" id="CHEBI:90770"/>
    </reaction>
    <physiologicalReaction direction="left-to-right" evidence="2">
        <dbReference type="Rhea" id="RHEA:48701"/>
    </physiologicalReaction>
</comment>
<comment type="catalytic activity">
    <reaction evidence="2">
        <text>1,2-dioctanoyl-3-O-beta-D-galactosyl-sn-glycerol + H2O = octanoyl-3-(beta-D-galactosyl)-sn-glycerol + octanoate + H(+)</text>
        <dbReference type="Rhea" id="RHEA:48696"/>
        <dbReference type="ChEBI" id="CHEBI:15377"/>
        <dbReference type="ChEBI" id="CHEBI:15378"/>
        <dbReference type="ChEBI" id="CHEBI:25646"/>
        <dbReference type="ChEBI" id="CHEBI:90453"/>
        <dbReference type="ChEBI" id="CHEBI:90769"/>
    </reaction>
    <physiologicalReaction direction="left-to-right" evidence="2">
        <dbReference type="Rhea" id="RHEA:48697"/>
    </physiologicalReaction>
</comment>
<comment type="catalytic activity">
    <reaction evidence="2">
        <text>1,2-didodecanoyl-3-beta-D-galactosyl-sn-glycerol + H2O = dodecanoyl-3-beta-D-galactosyl-sn-glycerol + dodecanoate + H(+)</text>
        <dbReference type="Rhea" id="RHEA:48540"/>
        <dbReference type="ChEBI" id="CHEBI:15377"/>
        <dbReference type="ChEBI" id="CHEBI:15378"/>
        <dbReference type="ChEBI" id="CHEBI:18262"/>
        <dbReference type="ChEBI" id="CHEBI:90340"/>
        <dbReference type="ChEBI" id="CHEBI:90515"/>
    </reaction>
    <physiologicalReaction direction="left-to-right" evidence="2">
        <dbReference type="Rhea" id="RHEA:48541"/>
    </physiologicalReaction>
</comment>
<comment type="catalytic activity">
    <reaction evidence="2">
        <text>1-beta-D-galactosyl-2,3-didodecanoyl-sn-glycerol + H2O = 1-beta-D-galactosyl-dodecanoyl-sn-glycerol + dodecanoate + H(+)</text>
        <dbReference type="Rhea" id="RHEA:48536"/>
        <dbReference type="ChEBI" id="CHEBI:15377"/>
        <dbReference type="ChEBI" id="CHEBI:15378"/>
        <dbReference type="ChEBI" id="CHEBI:18262"/>
        <dbReference type="ChEBI" id="CHEBI:90342"/>
        <dbReference type="ChEBI" id="CHEBI:90514"/>
    </reaction>
    <physiologicalReaction direction="left-to-right" evidence="2">
        <dbReference type="Rhea" id="RHEA:48537"/>
    </physiologicalReaction>
</comment>
<comment type="catalytic activity">
    <reaction evidence="2">
        <text>a 1,2-diacyl-3-O-[alpha-D-galactosyl-(1-&gt;6)-beta-D-galactosyl]-sn-glycerol + H2O = acyl-3-O-[alpha-D-galactosyl-(1-&gt;6)-beta-D-galactosyl]-sn-glycerol + a fatty acid + H(+)</text>
        <dbReference type="Rhea" id="RHEA:48372"/>
        <dbReference type="ChEBI" id="CHEBI:15377"/>
        <dbReference type="ChEBI" id="CHEBI:15378"/>
        <dbReference type="ChEBI" id="CHEBI:28396"/>
        <dbReference type="ChEBI" id="CHEBI:28868"/>
        <dbReference type="ChEBI" id="CHEBI:90310"/>
    </reaction>
    <physiologicalReaction direction="left-to-right" evidence="2">
        <dbReference type="Rhea" id="RHEA:48373"/>
    </physiologicalReaction>
</comment>
<comment type="catalytic activity">
    <reaction evidence="2">
        <text>long chain 1,2-diacyl-3-O-[alpha-D-galactosyl-(1-&gt;6)-beta-D-galactosyl]-sn-glycerol + H2O = long chain acyl-3-O-[alpha-D-galactosyl-(1-&gt;6)-beta-D-galactosyl]-sn-glycerol + a fatty acid + H(+)</text>
        <dbReference type="Rhea" id="RHEA:48708"/>
        <dbReference type="ChEBI" id="CHEBI:15377"/>
        <dbReference type="ChEBI" id="CHEBI:15378"/>
        <dbReference type="ChEBI" id="CHEBI:28868"/>
        <dbReference type="ChEBI" id="CHEBI:90463"/>
        <dbReference type="ChEBI" id="CHEBI:90774"/>
    </reaction>
    <physiologicalReaction direction="left-to-right" evidence="2">
        <dbReference type="Rhea" id="RHEA:48709"/>
    </physiologicalReaction>
</comment>
<comment type="catalytic activity">
    <reaction evidence="2">
        <text>1,2-dioctanoyl-3-O-[alpha-D-galactosyl-(1-&gt;6)-beta-D-galactosyl]-sn-glycerol + H2O = octanoyl-3-O-[alpha-D-galactosyl-(1-&gt;6)-beta-D-galactosyl]-sn-glycerol + octanoate + H(+)</text>
        <dbReference type="Rhea" id="RHEA:48692"/>
        <dbReference type="ChEBI" id="CHEBI:15377"/>
        <dbReference type="ChEBI" id="CHEBI:15378"/>
        <dbReference type="ChEBI" id="CHEBI:25646"/>
        <dbReference type="ChEBI" id="CHEBI:90457"/>
        <dbReference type="ChEBI" id="CHEBI:90768"/>
    </reaction>
    <physiologicalReaction direction="left-to-right" evidence="2">
        <dbReference type="Rhea" id="RHEA:48693"/>
    </physiologicalReaction>
</comment>
<comment type="catalytic activity">
    <reaction evidence="2">
        <text>1,2-didodecanoyl-3-O-[alpha-D-galactosyl-(1-&gt;6)-beta-D-galactosyl]-sn-glycerol + H2O = dodecanoyl-3-O-[alpha-D-galactosyl-(1-&gt;6)-beta-D-galactosyl]-sn-glycerol + dodecanoate + H(+)</text>
        <dbReference type="Rhea" id="RHEA:48516"/>
        <dbReference type="ChEBI" id="CHEBI:15377"/>
        <dbReference type="ChEBI" id="CHEBI:15378"/>
        <dbReference type="ChEBI" id="CHEBI:18262"/>
        <dbReference type="ChEBI" id="CHEBI:90337"/>
        <dbReference type="ChEBI" id="CHEBI:90359"/>
    </reaction>
    <physiologicalReaction direction="left-to-right" evidence="2">
        <dbReference type="Rhea" id="RHEA:48517"/>
    </physiologicalReaction>
</comment>
<comment type="catalytic activity">
    <reaction evidence="8">
        <text>a 1,2-diacyl-sn-glycero-3-phosphocholine + H2O = a monoacyl-sn-glycero-3-phosphocholine + a fatty acid + H(+)</text>
        <dbReference type="Rhea" id="RHEA:44664"/>
        <dbReference type="ChEBI" id="CHEBI:15377"/>
        <dbReference type="ChEBI" id="CHEBI:15378"/>
        <dbReference type="ChEBI" id="CHEBI:28868"/>
        <dbReference type="ChEBI" id="CHEBI:57643"/>
        <dbReference type="ChEBI" id="CHEBI:84465"/>
    </reaction>
    <physiologicalReaction direction="left-to-right" evidence="10">
        <dbReference type="Rhea" id="RHEA:44665"/>
    </physiologicalReaction>
</comment>
<comment type="activity regulation">
    <text evidence="8">Triacylglycerol lipase activity is inhibited by increasing bile salts concentrations and not reactivated by CLPS.</text>
</comment>
<comment type="pathway">
    <text evidence="2">Glycerolipid metabolism; triacylglycerol degradation.</text>
</comment>
<comment type="pathway">
    <text evidence="2">Glycolipid metabolism.</text>
</comment>
<comment type="subcellular location">
    <subcellularLocation>
        <location evidence="2">Secreted</location>
    </subcellularLocation>
    <subcellularLocation>
        <location evidence="3">Zymogen granule membrane</location>
        <topology evidence="3">Peripheral membrane protein</topology>
    </subcellularLocation>
    <subcellularLocation>
        <location evidence="3">Cell projection</location>
        <location evidence="3">Neuron projection</location>
    </subcellularLocation>
    <text evidence="3">Localizes to neurite tips in neuronal cells.</text>
</comment>
<comment type="tissue specificity">
    <text evidence="7">Pancreas.</text>
</comment>
<comment type="similarity">
    <text evidence="9">Belongs to the AB hydrolase superfamily. Lipase family.</text>
</comment>
<accession>Q64424</accession>
<feature type="signal peptide" evidence="7">
    <location>
        <begin position="1"/>
        <end position="18"/>
    </location>
</feature>
<feature type="chain" id="PRO_0000017795" description="Pancreatic lipase-related protein 2">
    <location>
        <begin position="19"/>
        <end position="470"/>
    </location>
</feature>
<feature type="domain" description="PLAT" evidence="5">
    <location>
        <begin position="358"/>
        <end position="470"/>
    </location>
</feature>
<feature type="region of interest" description="Required for galactolipase activity" evidence="2">
    <location>
        <begin position="94"/>
        <end position="106"/>
    </location>
</feature>
<feature type="region of interest" description="Required for galactolipase activity" evidence="2">
    <location>
        <begin position="258"/>
        <end position="280"/>
    </location>
</feature>
<feature type="active site" description="Nucleophile" evidence="2">
    <location>
        <position position="172"/>
    </location>
</feature>
<feature type="active site" description="Charge relay system" evidence="2 6">
    <location>
        <position position="196"/>
    </location>
</feature>
<feature type="active site" description="Charge relay system" evidence="2 6">
    <location>
        <position position="283"/>
    </location>
</feature>
<feature type="binding site" evidence="2">
    <location>
        <position position="207"/>
    </location>
    <ligand>
        <name>Ca(2+)</name>
        <dbReference type="ChEBI" id="CHEBI:29108"/>
    </ligand>
</feature>
<feature type="binding site" evidence="2">
    <location>
        <position position="210"/>
    </location>
    <ligand>
        <name>Ca(2+)</name>
        <dbReference type="ChEBI" id="CHEBI:29108"/>
    </ligand>
</feature>
<feature type="binding site" evidence="2">
    <location>
        <position position="212"/>
    </location>
    <ligand>
        <name>Ca(2+)</name>
        <dbReference type="ChEBI" id="CHEBI:29108"/>
    </ligand>
</feature>
<feature type="binding site" evidence="2">
    <location>
        <position position="215"/>
    </location>
    <ligand>
        <name>Ca(2+)</name>
        <dbReference type="ChEBI" id="CHEBI:29108"/>
    </ligand>
</feature>
<feature type="glycosylation site" description="N-linked (GlcNAc...) asparagine" evidence="2">
    <location>
        <position position="354"/>
    </location>
</feature>
<feature type="glycosylation site" description="N-linked (GlcNAc...) asparagine" evidence="4">
    <location>
        <position position="429"/>
    </location>
</feature>
<feature type="disulfide bond" evidence="5">
    <location>
        <begin position="22"/>
        <end position="28"/>
    </location>
</feature>
<feature type="disulfide bond" evidence="5">
    <location>
        <begin position="110"/>
        <end position="121"/>
    </location>
</feature>
<feature type="disulfide bond" evidence="5">
    <location>
        <begin position="257"/>
        <end position="281"/>
    </location>
</feature>
<feature type="disulfide bond" evidence="5">
    <location>
        <begin position="305"/>
        <end position="316"/>
    </location>
</feature>
<feature type="disulfide bond" evidence="5">
    <location>
        <begin position="319"/>
        <end position="324"/>
    </location>
</feature>
<feature type="disulfide bond" evidence="5">
    <location>
        <begin position="454"/>
        <end position="470"/>
    </location>
</feature>